<keyword id="KW-0067">ATP-binding</keyword>
<keyword id="KW-0227">DNA damage</keyword>
<keyword id="KW-0234">DNA repair</keyword>
<keyword id="KW-0238">DNA-binding</keyword>
<keyword id="KW-0547">Nucleotide-binding</keyword>
<keyword id="KW-1185">Reference proteome</keyword>
<organism>
    <name type="scientific">Prochlorococcus marinus (strain NATL2A)</name>
    <dbReference type="NCBI Taxonomy" id="59920"/>
    <lineage>
        <taxon>Bacteria</taxon>
        <taxon>Bacillati</taxon>
        <taxon>Cyanobacteriota</taxon>
        <taxon>Cyanophyceae</taxon>
        <taxon>Synechococcales</taxon>
        <taxon>Prochlorococcaceae</taxon>
        <taxon>Prochlorococcus</taxon>
    </lineage>
</organism>
<name>MUTS_PROMT</name>
<protein>
    <recommendedName>
        <fullName evidence="1">DNA mismatch repair protein MutS</fullName>
    </recommendedName>
</protein>
<dbReference type="EMBL" id="CP000095">
    <property type="protein sequence ID" value="AAZ58733.1"/>
    <property type="molecule type" value="Genomic_DNA"/>
</dbReference>
<dbReference type="RefSeq" id="WP_011295587.1">
    <property type="nucleotide sequence ID" value="NC_007335.2"/>
</dbReference>
<dbReference type="SMR" id="Q46IE5"/>
<dbReference type="STRING" id="59920.PMN2A_1243"/>
<dbReference type="KEGG" id="pmn:PMN2A_1243"/>
<dbReference type="HOGENOM" id="CLU_002472_1_3_3"/>
<dbReference type="OrthoDB" id="9802448at2"/>
<dbReference type="PhylomeDB" id="Q46IE5"/>
<dbReference type="Proteomes" id="UP000002535">
    <property type="component" value="Chromosome"/>
</dbReference>
<dbReference type="GO" id="GO:0005829">
    <property type="term" value="C:cytosol"/>
    <property type="evidence" value="ECO:0007669"/>
    <property type="project" value="TreeGrafter"/>
</dbReference>
<dbReference type="GO" id="GO:0005524">
    <property type="term" value="F:ATP binding"/>
    <property type="evidence" value="ECO:0007669"/>
    <property type="project" value="UniProtKB-UniRule"/>
</dbReference>
<dbReference type="GO" id="GO:0140664">
    <property type="term" value="F:ATP-dependent DNA damage sensor activity"/>
    <property type="evidence" value="ECO:0007669"/>
    <property type="project" value="InterPro"/>
</dbReference>
<dbReference type="GO" id="GO:0003684">
    <property type="term" value="F:damaged DNA binding"/>
    <property type="evidence" value="ECO:0007669"/>
    <property type="project" value="UniProtKB-UniRule"/>
</dbReference>
<dbReference type="GO" id="GO:0030983">
    <property type="term" value="F:mismatched DNA binding"/>
    <property type="evidence" value="ECO:0007669"/>
    <property type="project" value="InterPro"/>
</dbReference>
<dbReference type="GO" id="GO:0006298">
    <property type="term" value="P:mismatch repair"/>
    <property type="evidence" value="ECO:0007669"/>
    <property type="project" value="UniProtKB-UniRule"/>
</dbReference>
<dbReference type="CDD" id="cd03284">
    <property type="entry name" value="ABC_MutS1"/>
    <property type="match status" value="1"/>
</dbReference>
<dbReference type="FunFam" id="1.10.1420.10:FF:000001">
    <property type="entry name" value="DNA mismatch repair protein MutS"/>
    <property type="match status" value="1"/>
</dbReference>
<dbReference type="FunFam" id="3.40.50.300:FF:000870">
    <property type="entry name" value="MutS protein homolog 4"/>
    <property type="match status" value="1"/>
</dbReference>
<dbReference type="Gene3D" id="1.10.1420.10">
    <property type="match status" value="2"/>
</dbReference>
<dbReference type="Gene3D" id="3.40.1170.10">
    <property type="entry name" value="DNA repair protein MutS, domain I"/>
    <property type="match status" value="1"/>
</dbReference>
<dbReference type="Gene3D" id="3.30.420.110">
    <property type="entry name" value="MutS, connector domain"/>
    <property type="match status" value="1"/>
</dbReference>
<dbReference type="Gene3D" id="3.40.50.300">
    <property type="entry name" value="P-loop containing nucleotide triphosphate hydrolases"/>
    <property type="match status" value="1"/>
</dbReference>
<dbReference type="HAMAP" id="MF_00096">
    <property type="entry name" value="MutS"/>
    <property type="match status" value="1"/>
</dbReference>
<dbReference type="InterPro" id="IPR005748">
    <property type="entry name" value="DNA_mismatch_repair_MutS"/>
</dbReference>
<dbReference type="InterPro" id="IPR007695">
    <property type="entry name" value="DNA_mismatch_repair_MutS-lik_N"/>
</dbReference>
<dbReference type="InterPro" id="IPR017261">
    <property type="entry name" value="DNA_mismatch_repair_MutS/MSH"/>
</dbReference>
<dbReference type="InterPro" id="IPR000432">
    <property type="entry name" value="DNA_mismatch_repair_MutS_C"/>
</dbReference>
<dbReference type="InterPro" id="IPR007861">
    <property type="entry name" value="DNA_mismatch_repair_MutS_clamp"/>
</dbReference>
<dbReference type="InterPro" id="IPR007696">
    <property type="entry name" value="DNA_mismatch_repair_MutS_core"/>
</dbReference>
<dbReference type="InterPro" id="IPR016151">
    <property type="entry name" value="DNA_mismatch_repair_MutS_N"/>
</dbReference>
<dbReference type="InterPro" id="IPR036187">
    <property type="entry name" value="DNA_mismatch_repair_MutS_sf"/>
</dbReference>
<dbReference type="InterPro" id="IPR007860">
    <property type="entry name" value="DNA_mmatch_repair_MutS_con_dom"/>
</dbReference>
<dbReference type="InterPro" id="IPR045076">
    <property type="entry name" value="MutS"/>
</dbReference>
<dbReference type="InterPro" id="IPR036678">
    <property type="entry name" value="MutS_con_dom_sf"/>
</dbReference>
<dbReference type="InterPro" id="IPR027417">
    <property type="entry name" value="P-loop_NTPase"/>
</dbReference>
<dbReference type="NCBIfam" id="TIGR01070">
    <property type="entry name" value="mutS1"/>
    <property type="match status" value="1"/>
</dbReference>
<dbReference type="NCBIfam" id="NF003810">
    <property type="entry name" value="PRK05399.1"/>
    <property type="match status" value="1"/>
</dbReference>
<dbReference type="PANTHER" id="PTHR11361:SF34">
    <property type="entry name" value="DNA MISMATCH REPAIR PROTEIN MSH1, MITOCHONDRIAL"/>
    <property type="match status" value="1"/>
</dbReference>
<dbReference type="PANTHER" id="PTHR11361">
    <property type="entry name" value="DNA MISMATCH REPAIR PROTEIN MUTS FAMILY MEMBER"/>
    <property type="match status" value="1"/>
</dbReference>
<dbReference type="Pfam" id="PF01624">
    <property type="entry name" value="MutS_I"/>
    <property type="match status" value="1"/>
</dbReference>
<dbReference type="Pfam" id="PF05188">
    <property type="entry name" value="MutS_II"/>
    <property type="match status" value="1"/>
</dbReference>
<dbReference type="Pfam" id="PF05192">
    <property type="entry name" value="MutS_III"/>
    <property type="match status" value="1"/>
</dbReference>
<dbReference type="Pfam" id="PF05190">
    <property type="entry name" value="MutS_IV"/>
    <property type="match status" value="1"/>
</dbReference>
<dbReference type="Pfam" id="PF00488">
    <property type="entry name" value="MutS_V"/>
    <property type="match status" value="1"/>
</dbReference>
<dbReference type="PIRSF" id="PIRSF037677">
    <property type="entry name" value="DNA_mis_repair_Msh6"/>
    <property type="match status" value="1"/>
</dbReference>
<dbReference type="SMART" id="SM00534">
    <property type="entry name" value="MUTSac"/>
    <property type="match status" value="1"/>
</dbReference>
<dbReference type="SMART" id="SM00533">
    <property type="entry name" value="MUTSd"/>
    <property type="match status" value="1"/>
</dbReference>
<dbReference type="SUPFAM" id="SSF55271">
    <property type="entry name" value="DNA repair protein MutS, domain I"/>
    <property type="match status" value="1"/>
</dbReference>
<dbReference type="SUPFAM" id="SSF53150">
    <property type="entry name" value="DNA repair protein MutS, domain II"/>
    <property type="match status" value="1"/>
</dbReference>
<dbReference type="SUPFAM" id="SSF48334">
    <property type="entry name" value="DNA repair protein MutS, domain III"/>
    <property type="match status" value="1"/>
</dbReference>
<dbReference type="SUPFAM" id="SSF52540">
    <property type="entry name" value="P-loop containing nucleoside triphosphate hydrolases"/>
    <property type="match status" value="1"/>
</dbReference>
<dbReference type="PROSITE" id="PS00486">
    <property type="entry name" value="DNA_MISMATCH_REPAIR_2"/>
    <property type="match status" value="1"/>
</dbReference>
<proteinExistence type="inferred from homology"/>
<evidence type="ECO:0000255" key="1">
    <source>
        <dbReference type="HAMAP-Rule" id="MF_00096"/>
    </source>
</evidence>
<evidence type="ECO:0000256" key="2">
    <source>
        <dbReference type="SAM" id="MobiDB-lite"/>
    </source>
</evidence>
<feature type="chain" id="PRO_0000224390" description="DNA mismatch repair protein MutS">
    <location>
        <begin position="1"/>
        <end position="926"/>
    </location>
</feature>
<feature type="region of interest" description="Disordered" evidence="2">
    <location>
        <begin position="1"/>
        <end position="60"/>
    </location>
</feature>
<feature type="compositionally biased region" description="Basic and acidic residues" evidence="2">
    <location>
        <begin position="20"/>
        <end position="31"/>
    </location>
</feature>
<feature type="binding site" evidence="1">
    <location>
        <begin position="726"/>
        <end position="733"/>
    </location>
    <ligand>
        <name>ATP</name>
        <dbReference type="ChEBI" id="CHEBI:30616"/>
    </ligand>
</feature>
<accession>Q46IE5</accession>
<comment type="function">
    <text evidence="1">This protein is involved in the repair of mismatches in DNA. It is possible that it carries out the mismatch recognition step. This protein has a weak ATPase activity.</text>
</comment>
<comment type="similarity">
    <text evidence="1">Belongs to the DNA mismatch repair MutS family.</text>
</comment>
<reference key="1">
    <citation type="journal article" date="2007" name="PLoS Genet.">
        <title>Patterns and implications of gene gain and loss in the evolution of Prochlorococcus.</title>
        <authorList>
            <person name="Kettler G.C."/>
            <person name="Martiny A.C."/>
            <person name="Huang K."/>
            <person name="Zucker J."/>
            <person name="Coleman M.L."/>
            <person name="Rodrigue S."/>
            <person name="Chen F."/>
            <person name="Lapidus A."/>
            <person name="Ferriera S."/>
            <person name="Johnson J."/>
            <person name="Steglich C."/>
            <person name="Church G.M."/>
            <person name="Richardson P."/>
            <person name="Chisholm S.W."/>
        </authorList>
    </citation>
    <scope>NUCLEOTIDE SEQUENCE [LARGE SCALE GENOMIC DNA]</scope>
    <source>
        <strain>NATL2A</strain>
    </source>
</reference>
<gene>
    <name evidence="1" type="primary">mutS</name>
    <name type="ordered locus">PMN2A_1243</name>
</gene>
<sequence length="926" mass="103958">MAASQNPIQGSLFGGNEESDLNKAEKLKGSERSNVNLSHQQLKEDASLRPRIKQTPKNPNQIIDLDELSRLAIEEPKWSHHNLPKIDDLTPALRHYVELKKENPDRVLLYRLGDFFECFFEDAITLSKLLEITLTSKEAGKKIGKIPMAGIPHHASDRYCTELIKKGLSIAICDQLEAAPTKGNKLIKRGITRLITPGTILEEGMLSAKKNNWLASVLLEAKSNQEIIDWSLAKIDVSTGEFIVQEGQGSNNLRHELIKLNAAEVISEKKSISNKIWYEGLIEITEFNRTSFSNLEAITTIKNHYCLNNIDSLGIHSNSLSIRTIGGLISYLNKTHPNIDDKSNNEIKTNICIDYPRIKNSRSGLIIDSQTRRNLEITSTQKDGKFQGSLLWAIDKTLTAMGARCIRRWIEEPTKDVNAIKNRQNIIGFLVKSSTLRKNIRKTLRAMGDLERLSGRAGAQQAGARDLVAIAEGINRLPLIKNYLNEPIFDKTKYFDSIINIDKDLIELASKINNQIIDNPPLSLTEGGLFYDGINPVLDGLRNQLDDHNIWLNSQELEERKKSNINNLKLQYHRSFGYFLAVSKSKAINVPDHWIRRQTLTNEERFVTPGLKEREGKIFQVRARISELEYELFCDLRKLTGSKSNIIRQAAKAISHLDVLTGLAELAANHNYIQPQIIDMNEQDKSRKLSIIDGRHPVVEQILVDKVFVPNDIELGSKTDLIILSGPNASGKSCYLRQVGLLQIMAQIGSWIPAKSAHMGIADQVFTRVGAVDDLASGQSTFMVEMIETAFILNNATENSLVLLDEIGRGTSTFDGLSIAWSVSEFLAKKIKSRSIFATHYHELNQISEYIENVENYKVVVEYKNHSLSFLHKVERGGANKSYGIEAARLAGVPPDVVNNARLILKNLEKNNSNTIQITKPIESCK</sequence>